<evidence type="ECO:0000255" key="1">
    <source>
        <dbReference type="HAMAP-Rule" id="MF_00262"/>
    </source>
</evidence>
<name>MINE_XYLF2</name>
<organism>
    <name type="scientific">Xylella fastidiosa (strain M23)</name>
    <dbReference type="NCBI Taxonomy" id="405441"/>
    <lineage>
        <taxon>Bacteria</taxon>
        <taxon>Pseudomonadati</taxon>
        <taxon>Pseudomonadota</taxon>
        <taxon>Gammaproteobacteria</taxon>
        <taxon>Lysobacterales</taxon>
        <taxon>Lysobacteraceae</taxon>
        <taxon>Xylella</taxon>
    </lineage>
</organism>
<feature type="chain" id="PRO_1000114254" description="Cell division topological specificity factor">
    <location>
        <begin position="1"/>
        <end position="85"/>
    </location>
</feature>
<comment type="function">
    <text evidence="1">Prevents the cell division inhibition by proteins MinC and MinD at internal division sites while permitting inhibition at polar sites. This ensures cell division at the proper site by restricting the formation of a division septum at the midpoint of the long axis of the cell.</text>
</comment>
<comment type="similarity">
    <text evidence="1">Belongs to the MinE family.</text>
</comment>
<protein>
    <recommendedName>
        <fullName evidence="1">Cell division topological specificity factor</fullName>
    </recommendedName>
</protein>
<gene>
    <name evidence="1" type="primary">minE</name>
    <name type="ordered locus">XfasM23_0596</name>
</gene>
<keyword id="KW-0131">Cell cycle</keyword>
<keyword id="KW-0132">Cell division</keyword>
<reference key="1">
    <citation type="journal article" date="2010" name="J. Bacteriol.">
        <title>Whole genome sequences of two Xylella fastidiosa strains (M12 and M23) causing almond leaf scorch disease in California.</title>
        <authorList>
            <person name="Chen J."/>
            <person name="Xie G."/>
            <person name="Han S."/>
            <person name="Chertkov O."/>
            <person name="Sims D."/>
            <person name="Civerolo E.L."/>
        </authorList>
    </citation>
    <scope>NUCLEOTIDE SEQUENCE [LARGE SCALE GENOMIC DNA]</scope>
    <source>
        <strain>M23</strain>
    </source>
</reference>
<proteinExistence type="inferred from homology"/>
<accession>B2I965</accession>
<sequence>MGLIDFLRNKTKTAETAKNRLQIIIAQERTQRGGPDYLPLLQRELLEVIKKYVKIDADAVKVDLIKDGANDVLDISVALPDDSER</sequence>
<dbReference type="EMBL" id="CP001011">
    <property type="protein sequence ID" value="ACB92040.1"/>
    <property type="molecule type" value="Genomic_DNA"/>
</dbReference>
<dbReference type="RefSeq" id="WP_004090594.1">
    <property type="nucleotide sequence ID" value="NC_010577.1"/>
</dbReference>
<dbReference type="SMR" id="B2I965"/>
<dbReference type="GeneID" id="93904281"/>
<dbReference type="KEGG" id="xfn:XfasM23_0596"/>
<dbReference type="HOGENOM" id="CLU_137929_2_1_6"/>
<dbReference type="Proteomes" id="UP000001698">
    <property type="component" value="Chromosome"/>
</dbReference>
<dbReference type="GO" id="GO:0051301">
    <property type="term" value="P:cell division"/>
    <property type="evidence" value="ECO:0007669"/>
    <property type="project" value="UniProtKB-KW"/>
</dbReference>
<dbReference type="GO" id="GO:0032955">
    <property type="term" value="P:regulation of division septum assembly"/>
    <property type="evidence" value="ECO:0007669"/>
    <property type="project" value="InterPro"/>
</dbReference>
<dbReference type="FunFam" id="3.30.1070.10:FF:000001">
    <property type="entry name" value="Cell division topological specificity factor"/>
    <property type="match status" value="1"/>
</dbReference>
<dbReference type="Gene3D" id="3.30.1070.10">
    <property type="entry name" value="Cell division topological specificity factor MinE"/>
    <property type="match status" value="1"/>
</dbReference>
<dbReference type="HAMAP" id="MF_00262">
    <property type="entry name" value="MinE"/>
    <property type="match status" value="1"/>
</dbReference>
<dbReference type="InterPro" id="IPR005527">
    <property type="entry name" value="MinE"/>
</dbReference>
<dbReference type="InterPro" id="IPR036707">
    <property type="entry name" value="MinE_sf"/>
</dbReference>
<dbReference type="NCBIfam" id="TIGR01215">
    <property type="entry name" value="minE"/>
    <property type="match status" value="1"/>
</dbReference>
<dbReference type="NCBIfam" id="NF001422">
    <property type="entry name" value="PRK00296.1"/>
    <property type="match status" value="1"/>
</dbReference>
<dbReference type="Pfam" id="PF03776">
    <property type="entry name" value="MinE"/>
    <property type="match status" value="1"/>
</dbReference>
<dbReference type="SUPFAM" id="SSF55229">
    <property type="entry name" value="Cell division protein MinE topological specificity domain"/>
    <property type="match status" value="1"/>
</dbReference>